<name>GLYT1_ARATH</name>
<feature type="chain" id="PRO_0000392292" description="Probable glycosyltransferase At3g07620">
    <location>
        <begin position="1"/>
        <end position="470"/>
    </location>
</feature>
<feature type="topological domain" description="Cytoplasmic" evidence="2">
    <location>
        <begin position="1"/>
        <end position="7"/>
    </location>
</feature>
<feature type="transmembrane region" description="Helical; Signal-anchor" evidence="2">
    <location>
        <begin position="8"/>
        <end position="28"/>
    </location>
</feature>
<feature type="topological domain" description="Lumenal" evidence="2">
    <location>
        <begin position="29"/>
        <end position="470"/>
    </location>
</feature>
<feature type="glycosylation site" description="N-linked (GlcNAc...) asparagine" evidence="2">
    <location>
        <position position="32"/>
    </location>
</feature>
<feature type="glycosylation site" description="N-linked (GlcNAc...) asparagine" evidence="2">
    <location>
        <position position="73"/>
    </location>
</feature>
<feature type="glycosylation site" description="N-linked (GlcNAc...) asparagine" evidence="2">
    <location>
        <position position="105"/>
    </location>
</feature>
<feature type="glycosylation site" description="N-linked (GlcNAc...) asparagine" evidence="2">
    <location>
        <position position="236"/>
    </location>
</feature>
<feature type="glycosylation site" description="N-linked (GlcNAc...) asparagine" evidence="2">
    <location>
        <position position="274"/>
    </location>
</feature>
<feature type="glycosylation site" description="N-linked (GlcNAc...) asparagine" evidence="2">
    <location>
        <position position="299"/>
    </location>
</feature>
<reference key="1">
    <citation type="journal article" date="2000" name="Nature">
        <title>Sequence and analysis of chromosome 3 of the plant Arabidopsis thaliana.</title>
        <authorList>
            <person name="Salanoubat M."/>
            <person name="Lemcke K."/>
            <person name="Rieger M."/>
            <person name="Ansorge W."/>
            <person name="Unseld M."/>
            <person name="Fartmann B."/>
            <person name="Valle G."/>
            <person name="Bloecker H."/>
            <person name="Perez-Alonso M."/>
            <person name="Obermaier B."/>
            <person name="Delseny M."/>
            <person name="Boutry M."/>
            <person name="Grivell L.A."/>
            <person name="Mache R."/>
            <person name="Puigdomenech P."/>
            <person name="De Simone V."/>
            <person name="Choisne N."/>
            <person name="Artiguenave F."/>
            <person name="Robert C."/>
            <person name="Brottier P."/>
            <person name="Wincker P."/>
            <person name="Cattolico L."/>
            <person name="Weissenbach J."/>
            <person name="Saurin W."/>
            <person name="Quetier F."/>
            <person name="Schaefer M."/>
            <person name="Mueller-Auer S."/>
            <person name="Gabel C."/>
            <person name="Fuchs M."/>
            <person name="Benes V."/>
            <person name="Wurmbach E."/>
            <person name="Drzonek H."/>
            <person name="Erfle H."/>
            <person name="Jordan N."/>
            <person name="Bangert S."/>
            <person name="Wiedelmann R."/>
            <person name="Kranz H."/>
            <person name="Voss H."/>
            <person name="Holland R."/>
            <person name="Brandt P."/>
            <person name="Nyakatura G."/>
            <person name="Vezzi A."/>
            <person name="D'Angelo M."/>
            <person name="Pallavicini A."/>
            <person name="Toppo S."/>
            <person name="Simionati B."/>
            <person name="Conrad A."/>
            <person name="Hornischer K."/>
            <person name="Kauer G."/>
            <person name="Loehnert T.-H."/>
            <person name="Nordsiek G."/>
            <person name="Reichelt J."/>
            <person name="Scharfe M."/>
            <person name="Schoen O."/>
            <person name="Bargues M."/>
            <person name="Terol J."/>
            <person name="Climent J."/>
            <person name="Navarro P."/>
            <person name="Collado C."/>
            <person name="Perez-Perez A."/>
            <person name="Ottenwaelder B."/>
            <person name="Duchemin D."/>
            <person name="Cooke R."/>
            <person name="Laudie M."/>
            <person name="Berger-Llauro C."/>
            <person name="Purnelle B."/>
            <person name="Masuy D."/>
            <person name="de Haan M."/>
            <person name="Maarse A.C."/>
            <person name="Alcaraz J.-P."/>
            <person name="Cottet A."/>
            <person name="Casacuberta E."/>
            <person name="Monfort A."/>
            <person name="Argiriou A."/>
            <person name="Flores M."/>
            <person name="Liguori R."/>
            <person name="Vitale D."/>
            <person name="Mannhaupt G."/>
            <person name="Haase D."/>
            <person name="Schoof H."/>
            <person name="Rudd S."/>
            <person name="Zaccaria P."/>
            <person name="Mewes H.-W."/>
            <person name="Mayer K.F.X."/>
            <person name="Kaul S."/>
            <person name="Town C.D."/>
            <person name="Koo H.L."/>
            <person name="Tallon L.J."/>
            <person name="Jenkins J."/>
            <person name="Rooney T."/>
            <person name="Rizzo M."/>
            <person name="Walts A."/>
            <person name="Utterback T."/>
            <person name="Fujii C.Y."/>
            <person name="Shea T.P."/>
            <person name="Creasy T.H."/>
            <person name="Haas B."/>
            <person name="Maiti R."/>
            <person name="Wu D."/>
            <person name="Peterson J."/>
            <person name="Van Aken S."/>
            <person name="Pai G."/>
            <person name="Militscher J."/>
            <person name="Sellers P."/>
            <person name="Gill J.E."/>
            <person name="Feldblyum T.V."/>
            <person name="Preuss D."/>
            <person name="Lin X."/>
            <person name="Nierman W.C."/>
            <person name="Salzberg S.L."/>
            <person name="White O."/>
            <person name="Venter J.C."/>
            <person name="Fraser C.M."/>
            <person name="Kaneko T."/>
            <person name="Nakamura Y."/>
            <person name="Sato S."/>
            <person name="Kato T."/>
            <person name="Asamizu E."/>
            <person name="Sasamoto S."/>
            <person name="Kimura T."/>
            <person name="Idesawa K."/>
            <person name="Kawashima K."/>
            <person name="Kishida Y."/>
            <person name="Kiyokawa C."/>
            <person name="Kohara M."/>
            <person name="Matsumoto M."/>
            <person name="Matsuno A."/>
            <person name="Muraki A."/>
            <person name="Nakayama S."/>
            <person name="Nakazaki N."/>
            <person name="Shinpo S."/>
            <person name="Takeuchi C."/>
            <person name="Wada T."/>
            <person name="Watanabe A."/>
            <person name="Yamada M."/>
            <person name="Yasuda M."/>
            <person name="Tabata S."/>
        </authorList>
    </citation>
    <scope>NUCLEOTIDE SEQUENCE [LARGE SCALE GENOMIC DNA]</scope>
    <source>
        <strain>cv. Columbia</strain>
    </source>
</reference>
<reference key="2">
    <citation type="journal article" date="2017" name="Plant J.">
        <title>Araport11: a complete reannotation of the Arabidopsis thaliana reference genome.</title>
        <authorList>
            <person name="Cheng C.Y."/>
            <person name="Krishnakumar V."/>
            <person name="Chan A.P."/>
            <person name="Thibaud-Nissen F."/>
            <person name="Schobel S."/>
            <person name="Town C.D."/>
        </authorList>
    </citation>
    <scope>GENOME REANNOTATION</scope>
    <source>
        <strain>cv. Columbia</strain>
    </source>
</reference>
<reference key="3">
    <citation type="journal article" date="2008" name="Plant Cell">
        <title>Identification of a xylogalacturonan xylosyltransferase involved in pectin biosynthesis in Arabidopsis.</title>
        <authorList>
            <person name="Jensen J.K."/>
            <person name="Sorensen S.O."/>
            <person name="Harholt J."/>
            <person name="Geshi N."/>
            <person name="Sakuragi Y."/>
            <person name="Moller I."/>
            <person name="Zandleven J."/>
            <person name="Bernal A.J."/>
            <person name="Jensen N.B."/>
            <person name="Sorensen C."/>
            <person name="Pauly M."/>
            <person name="Beldman G."/>
            <person name="Willats W.G."/>
            <person name="Scheller H.V."/>
        </authorList>
    </citation>
    <scope>IDENTIFICATION</scope>
</reference>
<keyword id="KW-0961">Cell wall biogenesis/degradation</keyword>
<keyword id="KW-0325">Glycoprotein</keyword>
<keyword id="KW-0328">Glycosyltransferase</keyword>
<keyword id="KW-0333">Golgi apparatus</keyword>
<keyword id="KW-0472">Membrane</keyword>
<keyword id="KW-1185">Reference proteome</keyword>
<keyword id="KW-0735">Signal-anchor</keyword>
<keyword id="KW-0808">Transferase</keyword>
<keyword id="KW-0812">Transmembrane</keyword>
<keyword id="KW-1133">Transmembrane helix</keyword>
<dbReference type="EC" id="2.4.-.-"/>
<dbReference type="EMBL" id="AC009176">
    <property type="protein sequence ID" value="AAF13080.1"/>
    <property type="molecule type" value="Genomic_DNA"/>
</dbReference>
<dbReference type="EMBL" id="CP002686">
    <property type="status" value="NOT_ANNOTATED_CDS"/>
    <property type="molecule type" value="Genomic_DNA"/>
</dbReference>
<dbReference type="SMR" id="Q9SSE8"/>
<dbReference type="FunCoup" id="Q9SSE8">
    <property type="interactions" value="3"/>
</dbReference>
<dbReference type="STRING" id="3702.Q9SSE8"/>
<dbReference type="CAZy" id="GT47">
    <property type="family name" value="Glycosyltransferase Family 47"/>
</dbReference>
<dbReference type="GlyGen" id="Q9SSE8">
    <property type="glycosylation" value="6 sites"/>
</dbReference>
<dbReference type="PaxDb" id="3702-AT3G07620.1"/>
<dbReference type="ProteomicsDB" id="248546"/>
<dbReference type="Araport" id="AT3G07620"/>
<dbReference type="TAIR" id="AT3G07620"/>
<dbReference type="eggNOG" id="KOG1021">
    <property type="taxonomic scope" value="Eukaryota"/>
</dbReference>
<dbReference type="HOGENOM" id="CLU_025166_1_1_1"/>
<dbReference type="InParanoid" id="Q9SSE8"/>
<dbReference type="PhylomeDB" id="Q9SSE8"/>
<dbReference type="BioCyc" id="ARA:AT3G07620-MONOMER"/>
<dbReference type="PRO" id="PR:Q9SSE8"/>
<dbReference type="Proteomes" id="UP000006548">
    <property type="component" value="Chromosome 3"/>
</dbReference>
<dbReference type="ExpressionAtlas" id="Q9SSE8">
    <property type="expression patterns" value="baseline and differential"/>
</dbReference>
<dbReference type="GO" id="GO:0000139">
    <property type="term" value="C:Golgi membrane"/>
    <property type="evidence" value="ECO:0007669"/>
    <property type="project" value="UniProtKB-SubCell"/>
</dbReference>
<dbReference type="GO" id="GO:0016757">
    <property type="term" value="F:glycosyltransferase activity"/>
    <property type="evidence" value="ECO:0007669"/>
    <property type="project" value="UniProtKB-KW"/>
</dbReference>
<dbReference type="GO" id="GO:0071555">
    <property type="term" value="P:cell wall organization"/>
    <property type="evidence" value="ECO:0007669"/>
    <property type="project" value="UniProtKB-KW"/>
</dbReference>
<dbReference type="GO" id="GO:0006486">
    <property type="term" value="P:protein glycosylation"/>
    <property type="evidence" value="ECO:0007669"/>
    <property type="project" value="InterPro"/>
</dbReference>
<dbReference type="InterPro" id="IPR004263">
    <property type="entry name" value="Exostosin"/>
</dbReference>
<dbReference type="InterPro" id="IPR040911">
    <property type="entry name" value="Exostosin_GT47"/>
</dbReference>
<dbReference type="PANTHER" id="PTHR11062:SF217">
    <property type="entry name" value="EXOSTOSIN FAMILY PROTEIN"/>
    <property type="match status" value="1"/>
</dbReference>
<dbReference type="PANTHER" id="PTHR11062">
    <property type="entry name" value="EXOSTOSIN HEPARAN SULFATE GLYCOSYLTRANSFERASE -RELATED"/>
    <property type="match status" value="1"/>
</dbReference>
<dbReference type="Pfam" id="PF03016">
    <property type="entry name" value="Exostosin_GT47"/>
    <property type="match status" value="1"/>
</dbReference>
<protein>
    <recommendedName>
        <fullName>Probable glycosyltransferase At3g07620</fullName>
        <ecNumber>2.4.-.-</ecNumber>
    </recommendedName>
</protein>
<evidence type="ECO:0000250" key="1"/>
<evidence type="ECO:0000255" key="2"/>
<evidence type="ECO:0000305" key="3"/>
<comment type="function">
    <text>May be involved in cell wall biosynthesis.</text>
</comment>
<comment type="subcellular location">
    <subcellularLocation>
        <location evidence="1">Golgi apparatus membrane</location>
        <topology evidence="1">Single-pass type II membrane protein</topology>
    </subcellularLocation>
</comment>
<comment type="similarity">
    <text evidence="3">Belongs to the glycosyltransferase 47 family.</text>
</comment>
<proteinExistence type="inferred from homology"/>
<gene>
    <name type="ordered locus">At3g07620</name>
    <name type="ORF">MLP3.7</name>
</gene>
<sequence length="470" mass="54691">MRDYIPKYLNAFLLAFATFAVGFAIFIAKDSNSSSHLYFSTSSSLWTSSFSPAFITVSIFLTVHRFREKRKRNGSNPGSGYWKRDGKVEAELATARVLIREAQLNYSSTTSSPLGDEDYVPHGDIYRNPYAFHRSYLLMEKMFKIYVYEEGDPPIFHYGLCKDIYSMEGLFLNFMENDVLKYRTRDPDKAHVYFLPFSVVMILHHLFDPVVRDKAVLERVIADYVQIISKKYPYWNTSDGFDHFMLSCHDWGHRATWYVKKLFFNSIRVLCNANISEYFNPEKDAPFPEINLLTGDINNLTGGLDPISRTTLAFFAGKSHGKIRPVLLNHWKEKDKDILVYENLPDGLDYTEMMRKSRFCICPSGHEVASPRVPEAIYSGCVPVLISENYVLPFSDVLNWEKFSVSVSVKEIPELKRILMDIPEERYMRLYEGVKKVKRHILVNDPPKRYDVFNMIIHSIWLRRLNVKLL</sequence>
<organism>
    <name type="scientific">Arabidopsis thaliana</name>
    <name type="common">Mouse-ear cress</name>
    <dbReference type="NCBI Taxonomy" id="3702"/>
    <lineage>
        <taxon>Eukaryota</taxon>
        <taxon>Viridiplantae</taxon>
        <taxon>Streptophyta</taxon>
        <taxon>Embryophyta</taxon>
        <taxon>Tracheophyta</taxon>
        <taxon>Spermatophyta</taxon>
        <taxon>Magnoliopsida</taxon>
        <taxon>eudicotyledons</taxon>
        <taxon>Gunneridae</taxon>
        <taxon>Pentapetalae</taxon>
        <taxon>rosids</taxon>
        <taxon>malvids</taxon>
        <taxon>Brassicales</taxon>
        <taxon>Brassicaceae</taxon>
        <taxon>Camelineae</taxon>
        <taxon>Arabidopsis</taxon>
    </lineage>
</organism>
<accession>Q9SSE8</accession>